<protein>
    <recommendedName>
        <fullName>Protein ninB</fullName>
    </recommendedName>
</protein>
<organism>
    <name type="scientific">Escherichia phage lambda</name>
    <name type="common">Bacteriophage lambda</name>
    <dbReference type="NCBI Taxonomy" id="2681611"/>
    <lineage>
        <taxon>Viruses</taxon>
        <taxon>Duplodnaviria</taxon>
        <taxon>Heunggongvirae</taxon>
        <taxon>Uroviricota</taxon>
        <taxon>Caudoviricetes</taxon>
        <taxon>Lambdavirus</taxon>
        <taxon>Lambdavirus lambda</taxon>
    </lineage>
</organism>
<name>NINB_LAMBD</name>
<evidence type="ECO:0000305" key="1"/>
<evidence type="ECO:0007829" key="2">
    <source>
        <dbReference type="PDB" id="1PC6"/>
    </source>
</evidence>
<accession>P03765</accession>
<proteinExistence type="evidence at protein level"/>
<keyword id="KW-0002">3D-structure</keyword>
<keyword id="KW-1185">Reference proteome</keyword>
<dbReference type="EMBL" id="J02459">
    <property type="protein sequence ID" value="AAA96587.1"/>
    <property type="molecule type" value="Genomic_DNA"/>
</dbReference>
<dbReference type="PIR" id="H43010">
    <property type="entry name" value="QXBP4L"/>
</dbReference>
<dbReference type="RefSeq" id="NP_040634.1">
    <property type="nucleotide sequence ID" value="NC_001416.1"/>
</dbReference>
<dbReference type="PDB" id="1PC6">
    <property type="method" value="X-ray"/>
    <property type="resolution" value="2.51 A"/>
    <property type="chains" value="A/B=1-146"/>
</dbReference>
<dbReference type="PDBsum" id="1PC6"/>
<dbReference type="SMR" id="P03765"/>
<dbReference type="IntAct" id="P03765">
    <property type="interactions" value="5"/>
</dbReference>
<dbReference type="DrugBank" id="DB03345">
    <property type="generic name" value="Mercaptoethanol"/>
</dbReference>
<dbReference type="GeneID" id="2703497"/>
<dbReference type="KEGG" id="vg:2703497"/>
<dbReference type="EvolutionaryTrace" id="P03765"/>
<dbReference type="Proteomes" id="UP000001711">
    <property type="component" value="Genome"/>
</dbReference>
<dbReference type="Gene3D" id="1.10.3790.10">
    <property type="entry name" value="NinB"/>
    <property type="match status" value="1"/>
</dbReference>
<dbReference type="InterPro" id="IPR036619">
    <property type="entry name" value="NinB_sf"/>
</dbReference>
<dbReference type="InterPro" id="IPR008711">
    <property type="entry name" value="Recombinase_NinB"/>
</dbReference>
<dbReference type="Pfam" id="PF05772">
    <property type="entry name" value="NinB"/>
    <property type="match status" value="1"/>
</dbReference>
<dbReference type="SUPFAM" id="SSF103370">
    <property type="entry name" value="NinB"/>
    <property type="match status" value="1"/>
</dbReference>
<feature type="chain" id="PRO_0000077608" description="Protein ninB">
    <location>
        <begin position="1"/>
        <end position="146"/>
    </location>
</feature>
<feature type="strand" evidence="2">
    <location>
        <begin position="4"/>
        <end position="10"/>
    </location>
</feature>
<feature type="helix" evidence="2">
    <location>
        <begin position="11"/>
        <end position="22"/>
    </location>
</feature>
<feature type="strand" evidence="2">
    <location>
        <begin position="28"/>
        <end position="30"/>
    </location>
</feature>
<feature type="strand" evidence="2">
    <location>
        <begin position="32"/>
        <end position="38"/>
    </location>
</feature>
<feature type="helix" evidence="2">
    <location>
        <begin position="43"/>
        <end position="59"/>
    </location>
</feature>
<feature type="helix" evidence="2">
    <location>
        <begin position="69"/>
        <end position="80"/>
    </location>
</feature>
<feature type="strand" evidence="2">
    <location>
        <begin position="84"/>
        <end position="87"/>
    </location>
</feature>
<feature type="strand" evidence="2">
    <location>
        <begin position="89"/>
        <end position="97"/>
    </location>
</feature>
<feature type="turn" evidence="2">
    <location>
        <begin position="101"/>
        <end position="103"/>
    </location>
</feature>
<feature type="helix" evidence="2">
    <location>
        <begin position="106"/>
        <end position="122"/>
    </location>
</feature>
<feature type="helix" evidence="2">
    <location>
        <begin position="128"/>
        <end position="140"/>
    </location>
</feature>
<gene>
    <name type="primary">ninB</name>
</gene>
<reference key="1">
    <citation type="journal article" date="1982" name="J. Mol. Biol.">
        <title>Nucleotide sequence of bacteriophage lambda DNA.</title>
        <authorList>
            <person name="Sanger F."/>
            <person name="Coulson A.R."/>
            <person name="Hong G.F."/>
            <person name="Hill D.F."/>
            <person name="Petersen G.B."/>
        </authorList>
    </citation>
    <scope>NUCLEOTIDE SEQUENCE [LARGE SCALE GENOMIC DNA]</scope>
</reference>
<sequence length="146" mass="16648">MKKLTFEIRSPAHQQNAIHAVQQILPDPTKPIVVTIQERNRSLDQNRKLWACLGDVSRQVEWHGRWLDAESWKCVFTAALKQQDVVPNLAGNGFVVIGQSTSRMRVGEFAELLELIQAFGTERGVKWSDEARLALEWKARWGDRAA</sequence>
<organismHost>
    <name type="scientific">Escherichia coli</name>
    <dbReference type="NCBI Taxonomy" id="562"/>
</organismHost>
<comment type="similarity">
    <text evidence="1">Belongs to the ninB family.</text>
</comment>